<protein>
    <recommendedName>
        <fullName>HTH-type transcriptional regulator SkgA</fullName>
    </recommendedName>
    <alternativeName>
        <fullName>Stationary-phase regulation of KatG protein</fullName>
    </alternativeName>
</protein>
<proteinExistence type="inferred from homology"/>
<reference key="1">
    <citation type="journal article" date="1999" name="J. Bacteriol.">
        <title>Identification of a regulator that controls stationary-phase expression of catalase-peroxidase in Caulobacter crescentus.</title>
        <authorList>
            <person name="Rava P.S."/>
            <person name="Somma L."/>
            <person name="Steinman H.M."/>
        </authorList>
    </citation>
    <scope>NUCLEOTIDE SEQUENCE [GENOMIC DNA]</scope>
</reference>
<reference key="2">
    <citation type="journal article" date="2010" name="J. Bacteriol.">
        <title>The genetic basis of laboratory adaptation in Caulobacter crescentus.</title>
        <authorList>
            <person name="Marks M.E."/>
            <person name="Castro-Rojas C.M."/>
            <person name="Teiling C."/>
            <person name="Du L."/>
            <person name="Kapatral V."/>
            <person name="Walunas T.L."/>
            <person name="Crosson S."/>
        </authorList>
    </citation>
    <scope>NUCLEOTIDE SEQUENCE [LARGE SCALE GENOMIC DNA]</scope>
    <source>
        <strain>NA1000 / CB15N</strain>
    </source>
</reference>
<accession>B8H172</accession>
<accession>Q9RP67</accession>
<sequence length="255" mass="28965">MSVYTVKQMARLSGVSVRALHHYDAIGLLKPRAVGANGYRYYDRQDLLRLQQILFHRALETPLKDIQAALDQPGFDLAAALRAQRERLAAQAERYARLVDVVDRTLADLEGDETMDDKHLFEGFDPEKQARHEAWLVEHYGDEATRRIADAKAGMKSWGKKDWSQFQEEAKAIEHDLAKALTQGLPVDSAPVTAIMRRHWAWVGRSWNREPTPDAFAGLGHLYQANPEFTARYEAIAPGLTEYFSEAMRAFARGR</sequence>
<feature type="chain" id="PRO_0000378295" description="HTH-type transcriptional regulator SkgA">
    <location>
        <begin position="1"/>
        <end position="255"/>
    </location>
</feature>
<feature type="domain" description="HTH merR-type" evidence="2">
    <location>
        <begin position="3"/>
        <end position="72"/>
    </location>
</feature>
<feature type="DNA-binding region" description="H-T-H motif" evidence="2">
    <location>
        <begin position="6"/>
        <end position="25"/>
    </location>
</feature>
<name>SKGA_CAUVN</name>
<dbReference type="EMBL" id="AF170912">
    <property type="protein sequence ID" value="AAF01797.1"/>
    <property type="molecule type" value="Genomic_DNA"/>
</dbReference>
<dbReference type="EMBL" id="CP001340">
    <property type="protein sequence ID" value="ACL94195.1"/>
    <property type="molecule type" value="Genomic_DNA"/>
</dbReference>
<dbReference type="RefSeq" id="NP_419511.1">
    <property type="nucleotide sequence ID" value="NC_002696.2"/>
</dbReference>
<dbReference type="RefSeq" id="WP_010918580.1">
    <property type="nucleotide sequence ID" value="NC_011916.1"/>
</dbReference>
<dbReference type="RefSeq" id="YP_002516103.1">
    <property type="nucleotide sequence ID" value="NC_011916.1"/>
</dbReference>
<dbReference type="SMR" id="B8H172"/>
<dbReference type="GeneID" id="7332817"/>
<dbReference type="KEGG" id="ccs:CCNA_00730"/>
<dbReference type="PATRIC" id="fig|565050.3.peg.720"/>
<dbReference type="HOGENOM" id="CLU_060077_0_6_5"/>
<dbReference type="OrthoDB" id="9802944at2"/>
<dbReference type="PhylomeDB" id="B8H172"/>
<dbReference type="PRO" id="PR:B8H172"/>
<dbReference type="Proteomes" id="UP000001364">
    <property type="component" value="Chromosome"/>
</dbReference>
<dbReference type="GO" id="GO:0003677">
    <property type="term" value="F:DNA binding"/>
    <property type="evidence" value="ECO:0007669"/>
    <property type="project" value="UniProtKB-KW"/>
</dbReference>
<dbReference type="GO" id="GO:0003700">
    <property type="term" value="F:DNA-binding transcription factor activity"/>
    <property type="evidence" value="ECO:0007669"/>
    <property type="project" value="InterPro"/>
</dbReference>
<dbReference type="CDD" id="cd01106">
    <property type="entry name" value="HTH_TipAL-Mta"/>
    <property type="match status" value="1"/>
</dbReference>
<dbReference type="Gene3D" id="1.10.1660.10">
    <property type="match status" value="1"/>
</dbReference>
<dbReference type="Gene3D" id="1.10.490.50">
    <property type="entry name" value="Antibiotic binding domain of TipA-like multidrug resistance regulators"/>
    <property type="match status" value="1"/>
</dbReference>
<dbReference type="InterPro" id="IPR009061">
    <property type="entry name" value="DNA-bd_dom_put_sf"/>
</dbReference>
<dbReference type="InterPro" id="IPR000551">
    <property type="entry name" value="MerR-type_HTH_dom"/>
</dbReference>
<dbReference type="InterPro" id="IPR047057">
    <property type="entry name" value="MerR_fam"/>
</dbReference>
<dbReference type="InterPro" id="IPR036244">
    <property type="entry name" value="TipA-like_antibiotic-bd"/>
</dbReference>
<dbReference type="InterPro" id="IPR012925">
    <property type="entry name" value="TipAS_dom"/>
</dbReference>
<dbReference type="PANTHER" id="PTHR30204:SF90">
    <property type="entry name" value="HTH-TYPE TRANSCRIPTIONAL ACTIVATOR MTA"/>
    <property type="match status" value="1"/>
</dbReference>
<dbReference type="PANTHER" id="PTHR30204">
    <property type="entry name" value="REDOX-CYCLING DRUG-SENSING TRANSCRIPTIONAL ACTIVATOR SOXR"/>
    <property type="match status" value="1"/>
</dbReference>
<dbReference type="Pfam" id="PF13411">
    <property type="entry name" value="MerR_1"/>
    <property type="match status" value="1"/>
</dbReference>
<dbReference type="Pfam" id="PF07739">
    <property type="entry name" value="TipAS"/>
    <property type="match status" value="1"/>
</dbReference>
<dbReference type="SMART" id="SM00422">
    <property type="entry name" value="HTH_MERR"/>
    <property type="match status" value="1"/>
</dbReference>
<dbReference type="SUPFAM" id="SSF89082">
    <property type="entry name" value="Antibiotic binding domain of TipA-like multidrug resistance regulators"/>
    <property type="match status" value="1"/>
</dbReference>
<dbReference type="SUPFAM" id="SSF46955">
    <property type="entry name" value="Putative DNA-binding domain"/>
    <property type="match status" value="1"/>
</dbReference>
<dbReference type="PROSITE" id="PS50937">
    <property type="entry name" value="HTH_MERR_2"/>
    <property type="match status" value="1"/>
</dbReference>
<evidence type="ECO:0000250" key="1"/>
<evidence type="ECO:0000255" key="2">
    <source>
        <dbReference type="PROSITE-ProRule" id="PRU00254"/>
    </source>
</evidence>
<keyword id="KW-0010">Activator</keyword>
<keyword id="KW-0238">DNA-binding</keyword>
<keyword id="KW-1185">Reference proteome</keyword>
<keyword id="KW-0804">Transcription</keyword>
<keyword id="KW-0805">Transcription regulation</keyword>
<comment type="function">
    <text evidence="1">Regulates the induction of katG (catalase-peroxidase) in stationary phase.</text>
</comment>
<organism>
    <name type="scientific">Caulobacter vibrioides (strain NA1000 / CB15N)</name>
    <name type="common">Caulobacter crescentus</name>
    <dbReference type="NCBI Taxonomy" id="565050"/>
    <lineage>
        <taxon>Bacteria</taxon>
        <taxon>Pseudomonadati</taxon>
        <taxon>Pseudomonadota</taxon>
        <taxon>Alphaproteobacteria</taxon>
        <taxon>Caulobacterales</taxon>
        <taxon>Caulobacteraceae</taxon>
        <taxon>Caulobacter</taxon>
    </lineage>
</organism>
<gene>
    <name type="primary">skgA</name>
    <name type="ordered locus">CCNA_00730</name>
</gene>